<comment type="function">
    <text evidence="1">Involved in the transport of maltose and maltodextrins.</text>
</comment>
<comment type="catalytic activity">
    <reaction evidence="1">
        <text>beta-maltose(in) = beta-maltose(out)</text>
        <dbReference type="Rhea" id="RHEA:29731"/>
        <dbReference type="ChEBI" id="CHEBI:18147"/>
    </reaction>
</comment>
<comment type="subunit">
    <text evidence="1">Homotrimer formed of three 18-stranded antiparallel beta-barrels, containing three independent channels.</text>
</comment>
<comment type="subcellular location">
    <subcellularLocation>
        <location evidence="1">Cell outer membrane</location>
        <topology evidence="1">Multi-pass membrane protein</topology>
    </subcellularLocation>
</comment>
<comment type="induction">
    <text evidence="1">By maltose.</text>
</comment>
<comment type="similarity">
    <text evidence="1">Belongs to the porin LamB (TC 1.B.3) family.</text>
</comment>
<keyword id="KW-0002">3D-structure</keyword>
<keyword id="KW-0998">Cell outer membrane</keyword>
<keyword id="KW-0406">Ion transport</keyword>
<keyword id="KW-0472">Membrane</keyword>
<keyword id="KW-0626">Porin</keyword>
<keyword id="KW-1185">Reference proteome</keyword>
<keyword id="KW-0732">Signal</keyword>
<keyword id="KW-0762">Sugar transport</keyword>
<keyword id="KW-0812">Transmembrane</keyword>
<keyword id="KW-1134">Transmembrane beta strand</keyword>
<keyword id="KW-0813">Transport</keyword>
<gene>
    <name evidence="1" type="primary">lamB</name>
    <name type="ordered locus">SSON_4214</name>
</gene>
<dbReference type="EMBL" id="CP000038">
    <property type="protein sequence ID" value="AAZ90713.1"/>
    <property type="molecule type" value="Genomic_DNA"/>
</dbReference>
<dbReference type="RefSeq" id="WP_000973658.1">
    <property type="nucleotide sequence ID" value="NC_007384.1"/>
</dbReference>
<dbReference type="PDB" id="8XCJ">
    <property type="method" value="EM"/>
    <property type="resolution" value="2.98 A"/>
    <property type="chains" value="A/B/C=25-446"/>
</dbReference>
<dbReference type="PDBsum" id="8XCJ"/>
<dbReference type="SMR" id="Q3YUU9"/>
<dbReference type="GeneID" id="93777799"/>
<dbReference type="KEGG" id="ssn:SSON_4214"/>
<dbReference type="HOGENOM" id="CLU_032473_4_1_6"/>
<dbReference type="Proteomes" id="UP000002529">
    <property type="component" value="Chromosome"/>
</dbReference>
<dbReference type="GO" id="GO:0009279">
    <property type="term" value="C:cell outer membrane"/>
    <property type="evidence" value="ECO:0007669"/>
    <property type="project" value="UniProtKB-SubCell"/>
</dbReference>
<dbReference type="GO" id="GO:0046930">
    <property type="term" value="C:pore complex"/>
    <property type="evidence" value="ECO:0007669"/>
    <property type="project" value="UniProtKB-KW"/>
</dbReference>
<dbReference type="GO" id="GO:0042958">
    <property type="term" value="F:maltodextrin transmembrane transporter activity"/>
    <property type="evidence" value="ECO:0007669"/>
    <property type="project" value="InterPro"/>
</dbReference>
<dbReference type="GO" id="GO:0015481">
    <property type="term" value="F:maltose transporting porin activity"/>
    <property type="evidence" value="ECO:0007669"/>
    <property type="project" value="InterPro"/>
</dbReference>
<dbReference type="GO" id="GO:0006811">
    <property type="term" value="P:monoatomic ion transport"/>
    <property type="evidence" value="ECO:0007669"/>
    <property type="project" value="UniProtKB-KW"/>
</dbReference>
<dbReference type="CDD" id="cd01346">
    <property type="entry name" value="Maltoporin-like"/>
    <property type="match status" value="1"/>
</dbReference>
<dbReference type="FunFam" id="2.40.170.10:FF:000001">
    <property type="entry name" value="Maltoporin"/>
    <property type="match status" value="1"/>
</dbReference>
<dbReference type="Gene3D" id="2.40.170.10">
    <property type="entry name" value="Porin, LamB type"/>
    <property type="match status" value="1"/>
</dbReference>
<dbReference type="HAMAP" id="MF_01301">
    <property type="entry name" value="LamB"/>
    <property type="match status" value="1"/>
</dbReference>
<dbReference type="InterPro" id="IPR050286">
    <property type="entry name" value="G_neg_Bact_CarbUptk_Porin"/>
</dbReference>
<dbReference type="InterPro" id="IPR023738">
    <property type="entry name" value="Maltoporin"/>
</dbReference>
<dbReference type="InterPro" id="IPR003192">
    <property type="entry name" value="Porin_LamB"/>
</dbReference>
<dbReference type="InterPro" id="IPR036998">
    <property type="entry name" value="Porin_LamB_sf"/>
</dbReference>
<dbReference type="NCBIfam" id="NF006860">
    <property type="entry name" value="PRK09360.1"/>
    <property type="match status" value="1"/>
</dbReference>
<dbReference type="PANTHER" id="PTHR38762">
    <property type="entry name" value="CRYPTIC OUTER MEMBRANE PORIN BGLH-RELATED"/>
    <property type="match status" value="1"/>
</dbReference>
<dbReference type="PANTHER" id="PTHR38762:SF1">
    <property type="entry name" value="CRYPTIC OUTER MEMBRANE PORIN BGLH-RELATED"/>
    <property type="match status" value="1"/>
</dbReference>
<dbReference type="Pfam" id="PF02264">
    <property type="entry name" value="LamB"/>
    <property type="match status" value="1"/>
</dbReference>
<dbReference type="SUPFAM" id="SSF56935">
    <property type="entry name" value="Porins"/>
    <property type="match status" value="1"/>
</dbReference>
<accession>Q3YUU9</accession>
<sequence>MMITLRKLPLAVAVAAGVMSAQAMAVDFHGYARSGIGWTGSGGEQQCFQTTGAQSKYRLGNECETYAELKLGQEVWKEGDKSFYFDTNVAYSVAQQNDWEATDPAFREANVQGKNLIEWLPGSTIWAGKRFYQRHDVHMIDFYYWDISGPGAGLENIDVGFGKLSLAATRSSEAGGSSSFASNNIYDYTNETANDVFDVRLAQMEINPGGTLELGVDYGRANLRDNYRLVDGASKDGWLFTAEHTQSVLKGFNKFVVQYATDSMTSQGKGLSQGSGVAFDNEKFAYNINNNGHMLRILDHGAISMGDNWDMMYVGMYQDINWDNDNGTKWWTVGIRPMYKWTPIMSTVMEIGYDNVESQRTGDKNNQYKITLAQQWQAGDSIWSRPAIRVFATYAKWDEKWGYDYNGDSKVNPNYGKAVPADFNGGSFGRGDSDEWTFGAQMEIWW</sequence>
<proteinExistence type="evidence at protein level"/>
<evidence type="ECO:0000255" key="1">
    <source>
        <dbReference type="HAMAP-Rule" id="MF_01301"/>
    </source>
</evidence>
<name>LAMB_SHISS</name>
<reference key="1">
    <citation type="journal article" date="2005" name="Nucleic Acids Res.">
        <title>Genome dynamics and diversity of Shigella species, the etiologic agents of bacillary dysentery.</title>
        <authorList>
            <person name="Yang F."/>
            <person name="Yang J."/>
            <person name="Zhang X."/>
            <person name="Chen L."/>
            <person name="Jiang Y."/>
            <person name="Yan Y."/>
            <person name="Tang X."/>
            <person name="Wang J."/>
            <person name="Xiong Z."/>
            <person name="Dong J."/>
            <person name="Xue Y."/>
            <person name="Zhu Y."/>
            <person name="Xu X."/>
            <person name="Sun L."/>
            <person name="Chen S."/>
            <person name="Nie H."/>
            <person name="Peng J."/>
            <person name="Xu J."/>
            <person name="Wang Y."/>
            <person name="Yuan Z."/>
            <person name="Wen Y."/>
            <person name="Yao Z."/>
            <person name="Shen Y."/>
            <person name="Qiang B."/>
            <person name="Hou Y."/>
            <person name="Yu J."/>
            <person name="Jin Q."/>
        </authorList>
    </citation>
    <scope>NUCLEOTIDE SEQUENCE [LARGE SCALE GENOMIC DNA]</scope>
    <source>
        <strain>Ss046</strain>
    </source>
</reference>
<protein>
    <recommendedName>
        <fullName evidence="1">Maltoporin</fullName>
    </recommendedName>
    <alternativeName>
        <fullName evidence="1">Maltose-inducible porin</fullName>
    </alternativeName>
</protein>
<organism>
    <name type="scientific">Shigella sonnei (strain Ss046)</name>
    <dbReference type="NCBI Taxonomy" id="300269"/>
    <lineage>
        <taxon>Bacteria</taxon>
        <taxon>Pseudomonadati</taxon>
        <taxon>Pseudomonadota</taxon>
        <taxon>Gammaproteobacteria</taxon>
        <taxon>Enterobacterales</taxon>
        <taxon>Enterobacteriaceae</taxon>
        <taxon>Shigella</taxon>
    </lineage>
</organism>
<feature type="signal peptide" evidence="1">
    <location>
        <begin position="1"/>
        <end position="25"/>
    </location>
</feature>
<feature type="chain" id="PRO_0000228857" description="Maltoporin">
    <location>
        <begin position="26"/>
        <end position="446"/>
    </location>
</feature>
<feature type="site" description="Greasy slide, important in sugar transport" evidence="1">
    <location>
        <position position="31"/>
    </location>
</feature>
<feature type="site" description="Greasy slide, important in sugar transport" evidence="1">
    <location>
        <position position="66"/>
    </location>
</feature>
<feature type="site" description="Greasy slide, important in sugar transport" evidence="1">
    <location>
        <position position="99"/>
    </location>
</feature>
<feature type="site" description="Important in sugar transport" evidence="1">
    <location>
        <position position="143"/>
    </location>
</feature>
<feature type="site" description="Greasy slide, important in sugar transport" evidence="1">
    <location>
        <position position="252"/>
    </location>
</feature>
<feature type="site" description="Greasy slide, important in sugar transport" evidence="1">
    <location>
        <position position="383"/>
    </location>
</feature>
<feature type="site" description="Greasy slide, important in sugar transport" evidence="1">
    <location>
        <position position="445"/>
    </location>
</feature>